<name>NTRK3_MACFA</name>
<gene>
    <name type="primary">NTRK3</name>
</gene>
<reference key="1">
    <citation type="journal article" date="2004" name="Cell">
        <title>Accelerated evolution of nervous system genes in the origin of Homo sapiens.</title>
        <authorList>
            <person name="Dorus S."/>
            <person name="Vallender E.J."/>
            <person name="Evans P.D."/>
            <person name="Anderson J.R."/>
            <person name="Gilbert S.L."/>
            <person name="Mahowald M."/>
            <person name="Wyckoff G.J."/>
            <person name="Malcom C.M."/>
            <person name="Lahn B.T."/>
        </authorList>
    </citation>
    <scope>NUCLEOTIDE SEQUENCE [MRNA]</scope>
</reference>
<feature type="signal peptide" evidence="1">
    <location>
        <begin position="1"/>
        <end position="31"/>
    </location>
</feature>
<feature type="chain" id="PRO_0000016732" description="NT-3 growth factor receptor">
    <location>
        <begin position="32"/>
        <end position="825"/>
    </location>
</feature>
<feature type="topological domain" description="Extracellular" evidence="7">
    <location>
        <begin position="32"/>
        <end position="429"/>
    </location>
</feature>
<feature type="transmembrane region" description="Helical" evidence="7">
    <location>
        <begin position="430"/>
        <end position="453"/>
    </location>
</feature>
<feature type="topological domain" description="Cytoplasmic" evidence="7">
    <location>
        <begin position="454"/>
        <end position="825"/>
    </location>
</feature>
<feature type="repeat" description="LRR 1">
    <location>
        <begin position="104"/>
        <end position="125"/>
    </location>
</feature>
<feature type="repeat" description="LRR 2">
    <location>
        <begin position="128"/>
        <end position="149"/>
    </location>
</feature>
<feature type="domain" description="LRRCT">
    <location>
        <begin position="160"/>
        <end position="209"/>
    </location>
</feature>
<feature type="domain" description="Ig-like C2-type 1">
    <location>
        <begin position="210"/>
        <end position="300"/>
    </location>
</feature>
<feature type="domain" description="Ig-like C2-type 2">
    <location>
        <begin position="309"/>
        <end position="382"/>
    </location>
</feature>
<feature type="domain" description="Protein kinase" evidence="9">
    <location>
        <begin position="538"/>
        <end position="825"/>
    </location>
</feature>
<feature type="active site" description="Proton acceptor" evidence="9 10">
    <location>
        <position position="679"/>
    </location>
</feature>
<feature type="binding site" evidence="9">
    <location>
        <begin position="544"/>
        <end position="552"/>
    </location>
    <ligand>
        <name>ATP</name>
        <dbReference type="ChEBI" id="CHEBI:30616"/>
    </ligand>
</feature>
<feature type="binding site" evidence="9">
    <location>
        <position position="572"/>
    </location>
    <ligand>
        <name>ATP</name>
        <dbReference type="ChEBI" id="CHEBI:30616"/>
    </ligand>
</feature>
<feature type="site" description="Interaction with SHC1" evidence="1">
    <location>
        <position position="516"/>
    </location>
</feature>
<feature type="site" description="Interaction with PLC-gamma-1" evidence="1">
    <location>
        <position position="820"/>
    </location>
</feature>
<feature type="modified residue" description="Phosphoserine" evidence="5">
    <location>
        <position position="493"/>
    </location>
</feature>
<feature type="modified residue" description="Phosphotyrosine; by autocatalysis" evidence="4">
    <location>
        <position position="516"/>
    </location>
</feature>
<feature type="modified residue" description="Phosphotyrosine; by autocatalysis" evidence="1">
    <location>
        <position position="705"/>
    </location>
</feature>
<feature type="modified residue" description="Phosphotyrosine; by autocatalysis" evidence="1">
    <location>
        <position position="709"/>
    </location>
</feature>
<feature type="modified residue" description="Phosphotyrosine; by autocatalysis" evidence="1">
    <location>
        <position position="710"/>
    </location>
</feature>
<feature type="glycosylation site" description="N-linked (GlcNAc...) asparagine" evidence="7">
    <location>
        <position position="68"/>
    </location>
</feature>
<feature type="glycosylation site" description="N-linked (GlcNAc...) asparagine" evidence="7">
    <location>
        <position position="72"/>
    </location>
</feature>
<feature type="glycosylation site" description="N-linked (GlcNAc...) asparagine" evidence="7">
    <location>
        <position position="79"/>
    </location>
</feature>
<feature type="glycosylation site" description="N-linked (GlcNAc...) asparagine" evidence="7">
    <location>
        <position position="133"/>
    </location>
</feature>
<feature type="glycosylation site" description="N-linked (GlcNAc...) asparagine" evidence="7">
    <location>
        <position position="163"/>
    </location>
</feature>
<feature type="glycosylation site" description="N-linked (GlcNAc...) asparagine" evidence="7">
    <location>
        <position position="203"/>
    </location>
</feature>
<feature type="glycosylation site" description="N-linked (GlcNAc...) asparagine" evidence="7">
    <location>
        <position position="218"/>
    </location>
</feature>
<feature type="glycosylation site" description="N-linked (GlcNAc...) asparagine" evidence="7">
    <location>
        <position position="232"/>
    </location>
</feature>
<feature type="glycosylation site" description="N-linked (GlcNAc...) asparagine" evidence="7">
    <location>
        <position position="259"/>
    </location>
</feature>
<feature type="glycosylation site" description="N-linked (GlcNAc...) asparagine" evidence="7">
    <location>
        <position position="267"/>
    </location>
</feature>
<feature type="glycosylation site" description="N-linked (GlcNAc...) asparagine" evidence="7">
    <location>
        <position position="272"/>
    </location>
</feature>
<feature type="glycosylation site" description="N-linked (GlcNAc...) asparagine" evidence="7">
    <location>
        <position position="294"/>
    </location>
</feature>
<feature type="glycosylation site" description="N-linked (GlcNAc...) asparagine" evidence="7">
    <location>
        <position position="375"/>
    </location>
</feature>
<feature type="glycosylation site" description="N-linked (GlcNAc...) asparagine" evidence="7">
    <location>
        <position position="388"/>
    </location>
</feature>
<feature type="disulfide bond" evidence="6">
    <location>
        <begin position="32"/>
        <end position="38"/>
    </location>
</feature>
<feature type="disulfide bond" evidence="6">
    <location>
        <begin position="36"/>
        <end position="45"/>
    </location>
</feature>
<feature type="disulfide bond" evidence="6">
    <location>
        <begin position="164"/>
        <end position="189"/>
    </location>
</feature>
<feature type="disulfide bond" evidence="6">
    <location>
        <begin position="166"/>
        <end position="207"/>
    </location>
</feature>
<feature type="disulfide bond" evidence="6">
    <location>
        <begin position="231"/>
        <end position="284"/>
    </location>
</feature>
<feature type="disulfide bond" evidence="8">
    <location>
        <begin position="320"/>
        <end position="362"/>
    </location>
</feature>
<evidence type="ECO:0000250" key="1"/>
<evidence type="ECO:0000250" key="2">
    <source>
        <dbReference type="UniProtKB" id="P04629"/>
    </source>
</evidence>
<evidence type="ECO:0000250" key="3">
    <source>
        <dbReference type="UniProtKB" id="Q03351"/>
    </source>
</evidence>
<evidence type="ECO:0000250" key="4">
    <source>
        <dbReference type="UniProtKB" id="Q16288"/>
    </source>
</evidence>
<evidence type="ECO:0000250" key="5">
    <source>
        <dbReference type="UniProtKB" id="Q6VNS1"/>
    </source>
</evidence>
<evidence type="ECO:0000250" key="6">
    <source>
        <dbReference type="UniProtKB" id="Q91044"/>
    </source>
</evidence>
<evidence type="ECO:0000255" key="7"/>
<evidence type="ECO:0000255" key="8">
    <source>
        <dbReference type="PROSITE-ProRule" id="PRU00114"/>
    </source>
</evidence>
<evidence type="ECO:0000255" key="9">
    <source>
        <dbReference type="PROSITE-ProRule" id="PRU00159"/>
    </source>
</evidence>
<evidence type="ECO:0000255" key="10">
    <source>
        <dbReference type="PROSITE-ProRule" id="PRU10028"/>
    </source>
</evidence>
<protein>
    <recommendedName>
        <fullName>NT-3 growth factor receptor</fullName>
        <ecNumber>2.7.10.1</ecNumber>
    </recommendedName>
    <alternativeName>
        <fullName>Neurotrophic tyrosine kinase receptor type 3</fullName>
    </alternativeName>
</protein>
<proteinExistence type="evidence at transcript level"/>
<organism>
    <name type="scientific">Macaca fascicularis</name>
    <name type="common">Crab-eating macaque</name>
    <name type="synonym">Cynomolgus monkey</name>
    <dbReference type="NCBI Taxonomy" id="9541"/>
    <lineage>
        <taxon>Eukaryota</taxon>
        <taxon>Metazoa</taxon>
        <taxon>Chordata</taxon>
        <taxon>Craniata</taxon>
        <taxon>Vertebrata</taxon>
        <taxon>Euteleostomi</taxon>
        <taxon>Mammalia</taxon>
        <taxon>Eutheria</taxon>
        <taxon>Euarchontoglires</taxon>
        <taxon>Primates</taxon>
        <taxon>Haplorrhini</taxon>
        <taxon>Catarrhini</taxon>
        <taxon>Cercopithecidae</taxon>
        <taxon>Cercopithecinae</taxon>
        <taxon>Macaca</taxon>
    </lineage>
</organism>
<accession>Q5IFJ9</accession>
<comment type="function">
    <text evidence="4">Receptor tyrosine kinase involved in nervous system and probably heart development. Upon binding of its ligand NTF3/neurotrophin-3, NTRK3 autophosphorylates and activates different signaling pathways, including the phosphatidylinositol 3-kinase/AKT and the MAPK pathways, that control cell survival and differentiation.</text>
</comment>
<comment type="catalytic activity">
    <reaction evidence="10">
        <text>L-tyrosyl-[protein] + ATP = O-phospho-L-tyrosyl-[protein] + ADP + H(+)</text>
        <dbReference type="Rhea" id="RHEA:10596"/>
        <dbReference type="Rhea" id="RHEA-COMP:10136"/>
        <dbReference type="Rhea" id="RHEA-COMP:20101"/>
        <dbReference type="ChEBI" id="CHEBI:15378"/>
        <dbReference type="ChEBI" id="CHEBI:30616"/>
        <dbReference type="ChEBI" id="CHEBI:46858"/>
        <dbReference type="ChEBI" id="CHEBI:61978"/>
        <dbReference type="ChEBI" id="CHEBI:456216"/>
        <dbReference type="EC" id="2.7.10.1"/>
    </reaction>
</comment>
<comment type="subunit">
    <text evidence="2 3">Exists in a dynamic equilibrium between monomeric (low affinity) and dimeric (high affinity) structures (By similarity). Binds SH2B2. Interacts with SQSTM1 and KIDINS220. Interacts with PTPRS (By similarity). Interacts with MAPK8IP3/JIP3 (By similarity).</text>
</comment>
<comment type="subcellular location">
    <subcellularLocation>
        <location evidence="1">Membrane</location>
        <topology evidence="1">Single-pass type I membrane protein</topology>
    </subcellularLocation>
</comment>
<comment type="PTM">
    <text evidence="1">Ligand-mediated auto-phosphorylation.</text>
</comment>
<comment type="similarity">
    <text evidence="9">Belongs to the protein kinase superfamily. Tyr protein kinase family. Insulin receptor subfamily.</text>
</comment>
<sequence length="825" mass="92870">MDVSLCPAKCSFWRIFLLGSVWLDYVGSVLACPANCVCSKTEINCRRPDDGNLFPLLEGQDSGNSNGNASINITDISRNITSIHIENWRSLHTLNAVDMELYTGLQKLTIRNSGLRSIQPRAFAKNPHLRYINLSSNRLTTLSWQLFQTLSLRELQLEQNFFNCSCDIRWMQLWQEQGEAKLNNQNLYCINADGSQLPLFRMNISQCDLPEISVSHVNLTVREGDNAVITCNGSGSPLPDVDWIVTGLQSINTHQTNLNWTNVHAINLTLVNVTSEDNGFTLTCIAENVVGMSNASVALTVYYPPRVVSLEEPELRLEHCIEFVVRGNPPPTLHWLHNGQPLRESKIIHVEYYQEGEISEGCLLFNKPTHYNNGNYTLIAKNPLGTANQTINGHFLKEPFPESTDNFILFDEVSPTPPITVTHKPEEDTFGVSIAVGLAAFACVLLVVLFIMINKYGRRSKFGMKGPVAVISGEEDSASPLHHINHGITTPSSLDAGPDTVVIGMTRIPVIENPQYFRQGHNCHKPDTYVQHIKRRDIVLKRELGEGAFGKVFLAECYNLSPTKDKMLVAVKALKDPTLAARKDFQREAELLTNLQHEHIVKFYGVCGDGDPLIMVFEYMKHGDLNKFLRAHGPDAMILVDGQPRQAKGELGLSQMLHIASQIASGMVYLASQHFVHRDLATRNCLVGANLLVKIGDFGMSRDVYSTDYYRVGGHTMLPIRWMPPESIMYRKFTTESDVWSFGVILWEIFTYGKQPWFQLSNTEVIECITQGRVLERPRVCPKEVYDVMLGCWQREPQQRLNIKEIYKILHALGKATPIYLDILG</sequence>
<keyword id="KW-0067">ATP-binding</keyword>
<keyword id="KW-0217">Developmental protein</keyword>
<keyword id="KW-0221">Differentiation</keyword>
<keyword id="KW-1015">Disulfide bond</keyword>
<keyword id="KW-0325">Glycoprotein</keyword>
<keyword id="KW-0393">Immunoglobulin domain</keyword>
<keyword id="KW-0418">Kinase</keyword>
<keyword id="KW-0433">Leucine-rich repeat</keyword>
<keyword id="KW-0472">Membrane</keyword>
<keyword id="KW-0524">Neurogenesis</keyword>
<keyword id="KW-0547">Nucleotide-binding</keyword>
<keyword id="KW-0597">Phosphoprotein</keyword>
<keyword id="KW-0675">Receptor</keyword>
<keyword id="KW-1185">Reference proteome</keyword>
<keyword id="KW-0677">Repeat</keyword>
<keyword id="KW-0732">Signal</keyword>
<keyword id="KW-0808">Transferase</keyword>
<keyword id="KW-0812">Transmembrane</keyword>
<keyword id="KW-1133">Transmembrane helix</keyword>
<keyword id="KW-0829">Tyrosine-protein kinase</keyword>
<dbReference type="EC" id="2.7.10.1"/>
<dbReference type="EMBL" id="AY742818">
    <property type="protein sequence ID" value="AAW55576.1"/>
    <property type="molecule type" value="mRNA"/>
</dbReference>
<dbReference type="SMR" id="Q5IFJ9"/>
<dbReference type="STRING" id="9541.ENSMFAP00000025605"/>
<dbReference type="GlyCosmos" id="Q5IFJ9">
    <property type="glycosylation" value="14 sites, No reported glycans"/>
</dbReference>
<dbReference type="eggNOG" id="KOG1026">
    <property type="taxonomic scope" value="Eukaryota"/>
</dbReference>
<dbReference type="Proteomes" id="UP000233100">
    <property type="component" value="Unplaced"/>
</dbReference>
<dbReference type="GO" id="GO:0030424">
    <property type="term" value="C:axon"/>
    <property type="evidence" value="ECO:0007669"/>
    <property type="project" value="TreeGrafter"/>
</dbReference>
<dbReference type="GO" id="GO:0005886">
    <property type="term" value="C:plasma membrane"/>
    <property type="evidence" value="ECO:0007669"/>
    <property type="project" value="InterPro"/>
</dbReference>
<dbReference type="GO" id="GO:0043235">
    <property type="term" value="C:receptor complex"/>
    <property type="evidence" value="ECO:0007669"/>
    <property type="project" value="TreeGrafter"/>
</dbReference>
<dbReference type="GO" id="GO:0005524">
    <property type="term" value="F:ATP binding"/>
    <property type="evidence" value="ECO:0007669"/>
    <property type="project" value="UniProtKB-KW"/>
</dbReference>
<dbReference type="GO" id="GO:0043121">
    <property type="term" value="F:neurotrophin binding"/>
    <property type="evidence" value="ECO:0007669"/>
    <property type="project" value="TreeGrafter"/>
</dbReference>
<dbReference type="GO" id="GO:0005030">
    <property type="term" value="F:neurotrophin receptor activity"/>
    <property type="evidence" value="ECO:0007669"/>
    <property type="project" value="InterPro"/>
</dbReference>
<dbReference type="GO" id="GO:0004714">
    <property type="term" value="F:transmembrane receptor protein tyrosine kinase activity"/>
    <property type="evidence" value="ECO:0007669"/>
    <property type="project" value="UniProtKB-EC"/>
</dbReference>
<dbReference type="GO" id="GO:0030154">
    <property type="term" value="P:cell differentiation"/>
    <property type="evidence" value="ECO:0007669"/>
    <property type="project" value="UniProtKB-KW"/>
</dbReference>
<dbReference type="GO" id="GO:0007169">
    <property type="term" value="P:cell surface receptor protein tyrosine kinase signaling pathway"/>
    <property type="evidence" value="ECO:0007669"/>
    <property type="project" value="InterPro"/>
</dbReference>
<dbReference type="GO" id="GO:1990090">
    <property type="term" value="P:cellular response to nerve growth factor stimulus"/>
    <property type="evidence" value="ECO:0007669"/>
    <property type="project" value="TreeGrafter"/>
</dbReference>
<dbReference type="GO" id="GO:0007507">
    <property type="term" value="P:heart development"/>
    <property type="evidence" value="ECO:0000250"/>
    <property type="project" value="UniProtKB"/>
</dbReference>
<dbReference type="GO" id="GO:0007399">
    <property type="term" value="P:nervous system development"/>
    <property type="evidence" value="ECO:0007669"/>
    <property type="project" value="UniProtKB-KW"/>
</dbReference>
<dbReference type="GO" id="GO:0010976">
    <property type="term" value="P:positive regulation of neuron projection development"/>
    <property type="evidence" value="ECO:0007669"/>
    <property type="project" value="TreeGrafter"/>
</dbReference>
<dbReference type="GO" id="GO:0051897">
    <property type="term" value="P:positive regulation of phosphatidylinositol 3-kinase/protein kinase B signal transduction"/>
    <property type="evidence" value="ECO:0007669"/>
    <property type="project" value="TreeGrafter"/>
</dbReference>
<dbReference type="CDD" id="cd04971">
    <property type="entry name" value="IgI_TrKABC_d5"/>
    <property type="match status" value="1"/>
</dbReference>
<dbReference type="CDD" id="cd05094">
    <property type="entry name" value="PTKc_TrkC"/>
    <property type="match status" value="1"/>
</dbReference>
<dbReference type="FunFam" id="1.10.510.10:FF:000701">
    <property type="entry name" value="Tyrosine-protein kinase receptor"/>
    <property type="match status" value="1"/>
</dbReference>
<dbReference type="FunFam" id="2.60.40.10:FF:000251">
    <property type="entry name" value="Tyrosine-protein kinase receptor"/>
    <property type="match status" value="1"/>
</dbReference>
<dbReference type="FunFam" id="2.60.40.10:FF:000265">
    <property type="entry name" value="Tyrosine-protein kinase receptor"/>
    <property type="match status" value="1"/>
</dbReference>
<dbReference type="FunFam" id="3.30.200.20:FF:000033">
    <property type="entry name" value="Tyrosine-protein kinase receptor"/>
    <property type="match status" value="1"/>
</dbReference>
<dbReference type="FunFam" id="3.80.10.10:FF:000035">
    <property type="entry name" value="Tyrosine-protein kinase receptor"/>
    <property type="match status" value="1"/>
</dbReference>
<dbReference type="Gene3D" id="2.60.40.10">
    <property type="entry name" value="Immunoglobulins"/>
    <property type="match status" value="2"/>
</dbReference>
<dbReference type="Gene3D" id="3.30.200.20">
    <property type="entry name" value="Phosphorylase Kinase, domain 1"/>
    <property type="match status" value="1"/>
</dbReference>
<dbReference type="Gene3D" id="3.80.10.10">
    <property type="entry name" value="Ribonuclease Inhibitor"/>
    <property type="match status" value="1"/>
</dbReference>
<dbReference type="Gene3D" id="1.10.510.10">
    <property type="entry name" value="Transferase(Phosphotransferase) domain 1"/>
    <property type="match status" value="1"/>
</dbReference>
<dbReference type="InterPro" id="IPR000483">
    <property type="entry name" value="Cys-rich_flank_reg_C"/>
</dbReference>
<dbReference type="InterPro" id="IPR007110">
    <property type="entry name" value="Ig-like_dom"/>
</dbReference>
<dbReference type="InterPro" id="IPR036179">
    <property type="entry name" value="Ig-like_dom_sf"/>
</dbReference>
<dbReference type="InterPro" id="IPR013783">
    <property type="entry name" value="Ig-like_fold"/>
</dbReference>
<dbReference type="InterPro" id="IPR013098">
    <property type="entry name" value="Ig_I-set"/>
</dbReference>
<dbReference type="InterPro" id="IPR003599">
    <property type="entry name" value="Ig_sub"/>
</dbReference>
<dbReference type="InterPro" id="IPR013151">
    <property type="entry name" value="Immunoglobulin_dom"/>
</dbReference>
<dbReference type="InterPro" id="IPR011009">
    <property type="entry name" value="Kinase-like_dom_sf"/>
</dbReference>
<dbReference type="InterPro" id="IPR001611">
    <property type="entry name" value="Leu-rich_rpt"/>
</dbReference>
<dbReference type="InterPro" id="IPR032675">
    <property type="entry name" value="LRR_dom_sf"/>
</dbReference>
<dbReference type="InterPro" id="IPR000372">
    <property type="entry name" value="LRRNT"/>
</dbReference>
<dbReference type="InterPro" id="IPR020777">
    <property type="entry name" value="NTRK"/>
</dbReference>
<dbReference type="InterPro" id="IPR020446">
    <property type="entry name" value="NTRK3"/>
</dbReference>
<dbReference type="InterPro" id="IPR031635">
    <property type="entry name" value="NTRK_LRRCT"/>
</dbReference>
<dbReference type="InterPro" id="IPR000719">
    <property type="entry name" value="Prot_kinase_dom"/>
</dbReference>
<dbReference type="InterPro" id="IPR017441">
    <property type="entry name" value="Protein_kinase_ATP_BS"/>
</dbReference>
<dbReference type="InterPro" id="IPR050122">
    <property type="entry name" value="RTK"/>
</dbReference>
<dbReference type="InterPro" id="IPR001245">
    <property type="entry name" value="Ser-Thr/Tyr_kinase_cat_dom"/>
</dbReference>
<dbReference type="InterPro" id="IPR008266">
    <property type="entry name" value="Tyr_kinase_AS"/>
</dbReference>
<dbReference type="InterPro" id="IPR020635">
    <property type="entry name" value="Tyr_kinase_cat_dom"/>
</dbReference>
<dbReference type="InterPro" id="IPR002011">
    <property type="entry name" value="Tyr_kinase_rcpt_2_CS"/>
</dbReference>
<dbReference type="PANTHER" id="PTHR24416:SF66">
    <property type="entry name" value="NT-3 GROWTH FACTOR RECEPTOR"/>
    <property type="match status" value="1"/>
</dbReference>
<dbReference type="PANTHER" id="PTHR24416">
    <property type="entry name" value="TYROSINE-PROTEIN KINASE RECEPTOR"/>
    <property type="match status" value="1"/>
</dbReference>
<dbReference type="Pfam" id="PF07679">
    <property type="entry name" value="I-set"/>
    <property type="match status" value="1"/>
</dbReference>
<dbReference type="Pfam" id="PF00047">
    <property type="entry name" value="ig"/>
    <property type="match status" value="1"/>
</dbReference>
<dbReference type="Pfam" id="PF13855">
    <property type="entry name" value="LRR_8"/>
    <property type="match status" value="1"/>
</dbReference>
<dbReference type="Pfam" id="PF16920">
    <property type="entry name" value="LRRCT_2"/>
    <property type="match status" value="1"/>
</dbReference>
<dbReference type="Pfam" id="PF01462">
    <property type="entry name" value="LRRNT"/>
    <property type="match status" value="1"/>
</dbReference>
<dbReference type="Pfam" id="PF07714">
    <property type="entry name" value="PK_Tyr_Ser-Thr"/>
    <property type="match status" value="1"/>
</dbReference>
<dbReference type="PRINTS" id="PR01939">
    <property type="entry name" value="NTKRECEPTOR"/>
</dbReference>
<dbReference type="PRINTS" id="PR01942">
    <property type="entry name" value="NTKRECEPTOR3"/>
</dbReference>
<dbReference type="PRINTS" id="PR00109">
    <property type="entry name" value="TYRKINASE"/>
</dbReference>
<dbReference type="SMART" id="SM00409">
    <property type="entry name" value="IG"/>
    <property type="match status" value="1"/>
</dbReference>
<dbReference type="SMART" id="SM00082">
    <property type="entry name" value="LRRCT"/>
    <property type="match status" value="1"/>
</dbReference>
<dbReference type="SMART" id="SM00013">
    <property type="entry name" value="LRRNT"/>
    <property type="match status" value="1"/>
</dbReference>
<dbReference type="SMART" id="SM00219">
    <property type="entry name" value="TyrKc"/>
    <property type="match status" value="1"/>
</dbReference>
<dbReference type="SUPFAM" id="SSF48726">
    <property type="entry name" value="Immunoglobulin"/>
    <property type="match status" value="2"/>
</dbReference>
<dbReference type="SUPFAM" id="SSF52058">
    <property type="entry name" value="L domain-like"/>
    <property type="match status" value="1"/>
</dbReference>
<dbReference type="SUPFAM" id="SSF56112">
    <property type="entry name" value="Protein kinase-like (PK-like)"/>
    <property type="match status" value="1"/>
</dbReference>
<dbReference type="PROSITE" id="PS50835">
    <property type="entry name" value="IG_LIKE"/>
    <property type="match status" value="1"/>
</dbReference>
<dbReference type="PROSITE" id="PS51450">
    <property type="entry name" value="LRR"/>
    <property type="match status" value="1"/>
</dbReference>
<dbReference type="PROSITE" id="PS00107">
    <property type="entry name" value="PROTEIN_KINASE_ATP"/>
    <property type="match status" value="1"/>
</dbReference>
<dbReference type="PROSITE" id="PS50011">
    <property type="entry name" value="PROTEIN_KINASE_DOM"/>
    <property type="match status" value="1"/>
</dbReference>
<dbReference type="PROSITE" id="PS00109">
    <property type="entry name" value="PROTEIN_KINASE_TYR"/>
    <property type="match status" value="1"/>
</dbReference>
<dbReference type="PROSITE" id="PS00239">
    <property type="entry name" value="RECEPTOR_TYR_KIN_II"/>
    <property type="match status" value="1"/>
</dbReference>